<reference key="1">
    <citation type="journal article" date="2004" name="Genome Res.">
        <title>The status, quality, and expansion of the NIH full-length cDNA project: the Mammalian Gene Collection (MGC).</title>
        <authorList>
            <consortium name="The MGC Project Team"/>
        </authorList>
    </citation>
    <scope>NUCLEOTIDE SEQUENCE [LARGE SCALE MRNA]</scope>
    <source>
        <tissue>Testis</tissue>
    </source>
</reference>
<reference key="2">
    <citation type="journal article" date="2012" name="Nat. Commun.">
        <title>Quantitative maps of protein phosphorylation sites across 14 different rat organs and tissues.</title>
        <authorList>
            <person name="Lundby A."/>
            <person name="Secher A."/>
            <person name="Lage K."/>
            <person name="Nordsborg N.B."/>
            <person name="Dmytriyev A."/>
            <person name="Lundby C."/>
            <person name="Olsen J.V."/>
        </authorList>
    </citation>
    <scope>IDENTIFICATION BY MASS SPECTROMETRY [LARGE SCALE ANALYSIS]</scope>
</reference>
<proteinExistence type="evidence at protein level"/>
<sequence length="533" mass="58603">MGSILSRRIAGVEDIDIQANSAYRYPPKSAGNYFASHFFMGGEKFDTPHPEGYLFGENMDLNFLGSRPVQFPYVTPAPHEPVKTLRSLVNIRKDSLRLVRYKDDTDSPTEDGEKPRVLYSLEFTFDADARVAITIYCQAVEEFVNGMTVYSCKNPSLQSETVHYKRGVSQQFSLPSFKIDFSEWKDDELNFDLDRGVFPVVIQAVVDEGDVVEVTGHAHVLLAAFEKHVDGSFSVKPLKQKQIVDRVSYLLQEIYGIENKNNQETKPSDDENSDNSSECVVCLSDLRDTLILPCRHLCLCTSCADTLRYQANNCPICRLPFRALLQIRAVRKKPGALSPISFSPVLAQSVDHDEHSNSDSVPPGYEPISLLEALNGLRAVSPAIPSAPLYEEITYSGISDGLSQASCPLAGLDRIIENGIQKGKTQSKSPDSTLRSPSSPIHEEDEEKLSEDPEAPLPPSGVELVLQESSSPESFGTEEVGEPSLKQGSRVPSIDDVLQDGSPQHHGCSQPVPPADIYLPALGPESCSVGIEE</sequence>
<name>MGRN1_RAT</name>
<comment type="function">
    <text evidence="1 3">E3 ubiquitin-protein ligase. Mediates TSG101 monoubiquitination at multiple sites. Plays a role in the regulation of endosome-to-lysosome trafficking. Impairs MC1R- and MC4R-signaling by competing with GNAS-binding to MCRs and inhibiting agonist-induced cAMP production. Does not inhibit ADRB2-signaling. Does not promote MC1R ubiquitination. Also acts as a negative regulator of hedgehog signaling (By similarity).</text>
</comment>
<comment type="catalytic activity">
    <reaction>
        <text>S-ubiquitinyl-[E2 ubiquitin-conjugating enzyme]-L-cysteine + [acceptor protein]-L-lysine = [E2 ubiquitin-conjugating enzyme]-L-cysteine + N(6)-ubiquitinyl-[acceptor protein]-L-lysine.</text>
        <dbReference type="EC" id="2.3.2.27"/>
    </reaction>
</comment>
<comment type="pathway">
    <text>Protein modification; protein ubiquitination.</text>
</comment>
<comment type="subunit">
    <text evidence="1">Interacts with MC1R and MC4R. Interacts with TSG101. Interacts with mislocalized cytosolically exposed PRNP; this interaction alters MGRN1 subcellular location and causes lysosomal enlargement (By similarity).</text>
</comment>
<comment type="interaction">
    <interactant intactId="EBI-920669">
        <id>Q5XIQ4</id>
    </interactant>
    <interactant intactId="EBI-6290661">
        <id>O81775</id>
        <label>GDU1</label>
    </interactant>
    <organismsDiffer>true</organismsDiffer>
    <experiments>3</experiments>
</comment>
<comment type="subcellular location">
    <subcellularLocation>
        <location evidence="1">Cytoplasm</location>
        <location evidence="1">Cytosol</location>
    </subcellularLocation>
    <subcellularLocation>
        <location evidence="1">Cell membrane</location>
    </subcellularLocation>
    <subcellularLocation>
        <location evidence="1">Early endosome</location>
    </subcellularLocation>
    <text evidence="1">The endosomal localization is dependent on the interaction with TSG101.</text>
</comment>
<comment type="domain">
    <text evidence="1">The RING finger is required for ubiquitin ligase activity.</text>
</comment>
<comment type="PTM">
    <text evidence="1">Autoubiquitinated in vitro.</text>
</comment>
<keyword id="KW-1003">Cell membrane</keyword>
<keyword id="KW-0963">Cytoplasm</keyword>
<keyword id="KW-0967">Endosome</keyword>
<keyword id="KW-0449">Lipoprotein</keyword>
<keyword id="KW-0472">Membrane</keyword>
<keyword id="KW-0479">Metal-binding</keyword>
<keyword id="KW-0519">Myristate</keyword>
<keyword id="KW-0597">Phosphoprotein</keyword>
<keyword id="KW-1185">Reference proteome</keyword>
<keyword id="KW-0808">Transferase</keyword>
<keyword id="KW-0832">Ubl conjugation</keyword>
<keyword id="KW-0833">Ubl conjugation pathway</keyword>
<keyword id="KW-0862">Zinc</keyword>
<keyword id="KW-0863">Zinc-finger</keyword>
<protein>
    <recommendedName>
        <fullName>E3 ubiquitin-protein ligase MGRN1</fullName>
        <ecNumber>2.3.2.27</ecNumber>
    </recommendedName>
    <alternativeName>
        <fullName>Mahogunin RING finger protein 1</fullName>
    </alternativeName>
    <alternativeName>
        <fullName evidence="6">RING-type E3 ubiquitin transferase MGRN1</fullName>
    </alternativeName>
</protein>
<evidence type="ECO:0000250" key="1"/>
<evidence type="ECO:0000250" key="2">
    <source>
        <dbReference type="UniProtKB" id="O60291"/>
    </source>
</evidence>
<evidence type="ECO:0000250" key="3">
    <source>
        <dbReference type="UniProtKB" id="Q9D074"/>
    </source>
</evidence>
<evidence type="ECO:0000255" key="4">
    <source>
        <dbReference type="PROSITE-ProRule" id="PRU00175"/>
    </source>
</evidence>
<evidence type="ECO:0000256" key="5">
    <source>
        <dbReference type="SAM" id="MobiDB-lite"/>
    </source>
</evidence>
<evidence type="ECO:0000305" key="6"/>
<accession>Q5XIQ4</accession>
<organism>
    <name type="scientific">Rattus norvegicus</name>
    <name type="common">Rat</name>
    <dbReference type="NCBI Taxonomy" id="10116"/>
    <lineage>
        <taxon>Eukaryota</taxon>
        <taxon>Metazoa</taxon>
        <taxon>Chordata</taxon>
        <taxon>Craniata</taxon>
        <taxon>Vertebrata</taxon>
        <taxon>Euteleostomi</taxon>
        <taxon>Mammalia</taxon>
        <taxon>Eutheria</taxon>
        <taxon>Euarchontoglires</taxon>
        <taxon>Glires</taxon>
        <taxon>Rodentia</taxon>
        <taxon>Myomorpha</taxon>
        <taxon>Muroidea</taxon>
        <taxon>Muridae</taxon>
        <taxon>Murinae</taxon>
        <taxon>Rattus</taxon>
    </lineage>
</organism>
<feature type="initiator methionine" description="Removed" evidence="2">
    <location>
        <position position="1"/>
    </location>
</feature>
<feature type="chain" id="PRO_0000246689" description="E3 ubiquitin-protein ligase MGRN1">
    <location>
        <begin position="2"/>
        <end position="533"/>
    </location>
</feature>
<feature type="zinc finger region" description="RING-type" evidence="4">
    <location>
        <begin position="278"/>
        <end position="317"/>
    </location>
</feature>
<feature type="region of interest" description="Disordered" evidence="5">
    <location>
        <begin position="421"/>
        <end position="519"/>
    </location>
</feature>
<feature type="short sequence motif" description="Required for TSG101-binding" evidence="1">
    <location>
        <begin position="385"/>
        <end position="388"/>
    </location>
</feature>
<feature type="compositionally biased region" description="Polar residues" evidence="5">
    <location>
        <begin position="423"/>
        <end position="439"/>
    </location>
</feature>
<feature type="compositionally biased region" description="Acidic residues" evidence="5">
    <location>
        <begin position="443"/>
        <end position="454"/>
    </location>
</feature>
<feature type="modified residue" description="Phosphotyrosine" evidence="3">
    <location>
        <position position="390"/>
    </location>
</feature>
<feature type="modified residue" description="Phosphoserine" evidence="3">
    <location>
        <position position="429"/>
    </location>
</feature>
<feature type="modified residue" description="Phosphoserine" evidence="3">
    <location>
        <position position="450"/>
    </location>
</feature>
<feature type="modified residue" description="Phosphoserine" evidence="2">
    <location>
        <position position="502"/>
    </location>
</feature>
<feature type="lipid moiety-binding region" description="N-myristoyl glycine" evidence="1">
    <location>
        <position position="2"/>
    </location>
</feature>
<dbReference type="EC" id="2.3.2.27"/>
<dbReference type="EMBL" id="BC083621">
    <property type="protein sequence ID" value="AAH83621.1"/>
    <property type="molecule type" value="mRNA"/>
</dbReference>
<dbReference type="RefSeq" id="NP_001013986.1">
    <property type="nucleotide sequence ID" value="NM_001013964.1"/>
</dbReference>
<dbReference type="BioGRID" id="257343">
    <property type="interactions" value="5"/>
</dbReference>
<dbReference type="FunCoup" id="Q5XIQ4">
    <property type="interactions" value="3893"/>
</dbReference>
<dbReference type="IntAct" id="Q5XIQ4">
    <property type="interactions" value="8"/>
</dbReference>
<dbReference type="MINT" id="Q5XIQ4"/>
<dbReference type="STRING" id="10116.ENSRNOP00000071642"/>
<dbReference type="GlyGen" id="Q5XIQ4">
    <property type="glycosylation" value="1 site"/>
</dbReference>
<dbReference type="iPTMnet" id="Q5XIQ4"/>
<dbReference type="PhosphoSitePlus" id="Q5XIQ4"/>
<dbReference type="PaxDb" id="10116-ENSRNOP00000004416"/>
<dbReference type="GeneID" id="302938"/>
<dbReference type="KEGG" id="rno:302938"/>
<dbReference type="UCSC" id="RGD:1311862">
    <property type="organism name" value="rat"/>
</dbReference>
<dbReference type="AGR" id="RGD:1311862"/>
<dbReference type="CTD" id="23295"/>
<dbReference type="RGD" id="1311862">
    <property type="gene designation" value="Mgrn1"/>
</dbReference>
<dbReference type="VEuPathDB" id="HostDB:ENSRNOG00000003234"/>
<dbReference type="eggNOG" id="KOG4265">
    <property type="taxonomic scope" value="Eukaryota"/>
</dbReference>
<dbReference type="InParanoid" id="Q5XIQ4"/>
<dbReference type="Reactome" id="R-RNO-983168">
    <property type="pathway name" value="Antigen processing: Ubiquitination &amp; Proteasome degradation"/>
</dbReference>
<dbReference type="UniPathway" id="UPA00143"/>
<dbReference type="PRO" id="PR:Q5XIQ4"/>
<dbReference type="Proteomes" id="UP000002494">
    <property type="component" value="Chromosome 10"/>
</dbReference>
<dbReference type="Bgee" id="ENSRNOG00000003234">
    <property type="expression patterns" value="Expressed in frontal cortex and 18 other cell types or tissues"/>
</dbReference>
<dbReference type="ExpressionAtlas" id="Q5XIQ4">
    <property type="expression patterns" value="baseline and differential"/>
</dbReference>
<dbReference type="GO" id="GO:0005737">
    <property type="term" value="C:cytoplasm"/>
    <property type="evidence" value="ECO:0000266"/>
    <property type="project" value="RGD"/>
</dbReference>
<dbReference type="GO" id="GO:0005829">
    <property type="term" value="C:cytosol"/>
    <property type="evidence" value="ECO:0007669"/>
    <property type="project" value="UniProtKB-SubCell"/>
</dbReference>
<dbReference type="GO" id="GO:0005769">
    <property type="term" value="C:early endosome"/>
    <property type="evidence" value="ECO:0000266"/>
    <property type="project" value="RGD"/>
</dbReference>
<dbReference type="GO" id="GO:0005634">
    <property type="term" value="C:nucleus"/>
    <property type="evidence" value="ECO:0000266"/>
    <property type="project" value="RGD"/>
</dbReference>
<dbReference type="GO" id="GO:0005886">
    <property type="term" value="C:plasma membrane"/>
    <property type="evidence" value="ECO:0000266"/>
    <property type="project" value="RGD"/>
</dbReference>
<dbReference type="GO" id="GO:0000151">
    <property type="term" value="C:ubiquitin ligase complex"/>
    <property type="evidence" value="ECO:0000266"/>
    <property type="project" value="RGD"/>
</dbReference>
<dbReference type="GO" id="GO:0061630">
    <property type="term" value="F:ubiquitin protein ligase activity"/>
    <property type="evidence" value="ECO:0000266"/>
    <property type="project" value="RGD"/>
</dbReference>
<dbReference type="GO" id="GO:0004842">
    <property type="term" value="F:ubiquitin-protein transferase activity"/>
    <property type="evidence" value="ECO:0000250"/>
    <property type="project" value="UniProtKB"/>
</dbReference>
<dbReference type="GO" id="GO:0008270">
    <property type="term" value="F:zinc ion binding"/>
    <property type="evidence" value="ECO:0007669"/>
    <property type="project" value="UniProtKB-KW"/>
</dbReference>
<dbReference type="GO" id="GO:0008333">
    <property type="term" value="P:endosome to lysosome transport"/>
    <property type="evidence" value="ECO:0000266"/>
    <property type="project" value="RGD"/>
</dbReference>
<dbReference type="GO" id="GO:0007507">
    <property type="term" value="P:heart development"/>
    <property type="evidence" value="ECO:0000266"/>
    <property type="project" value="RGD"/>
</dbReference>
<dbReference type="GO" id="GO:0106072">
    <property type="term" value="P:negative regulation of adenylate cyclase-activating G protein-coupled receptor signaling pathway"/>
    <property type="evidence" value="ECO:0000250"/>
    <property type="project" value="UniProtKB"/>
</dbReference>
<dbReference type="GO" id="GO:0045744">
    <property type="term" value="P:negative regulation of G protein-coupled receptor signaling pathway"/>
    <property type="evidence" value="ECO:0000318"/>
    <property type="project" value="GO_Central"/>
</dbReference>
<dbReference type="GO" id="GO:0045879">
    <property type="term" value="P:negative regulation of smoothened signaling pathway"/>
    <property type="evidence" value="ECO:0000250"/>
    <property type="project" value="UniProtKB"/>
</dbReference>
<dbReference type="GO" id="GO:0006513">
    <property type="term" value="P:protein monoubiquitination"/>
    <property type="evidence" value="ECO:0000266"/>
    <property type="project" value="RGD"/>
</dbReference>
<dbReference type="GO" id="GO:0000209">
    <property type="term" value="P:protein polyubiquitination"/>
    <property type="evidence" value="ECO:0000266"/>
    <property type="project" value="RGD"/>
</dbReference>
<dbReference type="GO" id="GO:0016567">
    <property type="term" value="P:protein ubiquitination"/>
    <property type="evidence" value="ECO:0000266"/>
    <property type="project" value="RGD"/>
</dbReference>
<dbReference type="GO" id="GO:0065003">
    <property type="term" value="P:protein-containing complex assembly"/>
    <property type="evidence" value="ECO:0000266"/>
    <property type="project" value="RGD"/>
</dbReference>
<dbReference type="GO" id="GO:0007224">
    <property type="term" value="P:smoothened signaling pathway"/>
    <property type="evidence" value="ECO:0000266"/>
    <property type="project" value="RGD"/>
</dbReference>
<dbReference type="CDD" id="cd16816">
    <property type="entry name" value="mRING-HC-C3HC5_MGRN1"/>
    <property type="match status" value="1"/>
</dbReference>
<dbReference type="FunFam" id="3.30.40.10:FF:000013">
    <property type="entry name" value="E3 ubiquitin-protein ligase MGRN1 isoform 1"/>
    <property type="match status" value="1"/>
</dbReference>
<dbReference type="Gene3D" id="3.30.40.10">
    <property type="entry name" value="Zinc/RING finger domain, C3HC4 (zinc finger)"/>
    <property type="match status" value="1"/>
</dbReference>
<dbReference type="InterPro" id="IPR045194">
    <property type="entry name" value="MGRN1/RNF157-like"/>
</dbReference>
<dbReference type="InterPro" id="IPR001841">
    <property type="entry name" value="Znf_RING"/>
</dbReference>
<dbReference type="InterPro" id="IPR013083">
    <property type="entry name" value="Znf_RING/FYVE/PHD"/>
</dbReference>
<dbReference type="PANTHER" id="PTHR22996:SF2">
    <property type="entry name" value="E3 UBIQUITIN-PROTEIN LIGASE MGRN1"/>
    <property type="match status" value="1"/>
</dbReference>
<dbReference type="PANTHER" id="PTHR22996">
    <property type="entry name" value="MAHOGUNIN"/>
    <property type="match status" value="1"/>
</dbReference>
<dbReference type="Pfam" id="PF13920">
    <property type="entry name" value="zf-C3HC4_3"/>
    <property type="match status" value="1"/>
</dbReference>
<dbReference type="SMART" id="SM00184">
    <property type="entry name" value="RING"/>
    <property type="match status" value="1"/>
</dbReference>
<dbReference type="SUPFAM" id="SSF57850">
    <property type="entry name" value="RING/U-box"/>
    <property type="match status" value="1"/>
</dbReference>
<dbReference type="PROSITE" id="PS50089">
    <property type="entry name" value="ZF_RING_2"/>
    <property type="match status" value="1"/>
</dbReference>
<gene>
    <name type="primary">Mgrn1</name>
</gene>